<feature type="chain" id="PRO_0000129103" description="Surface presentation of antigens protein SpaQ">
    <location>
        <begin position="1"/>
        <end position="86"/>
    </location>
</feature>
<feature type="transmembrane region" description="Helical" evidence="1">
    <location>
        <begin position="16"/>
        <end position="36"/>
    </location>
</feature>
<feature type="transmembrane region" description="Helical" evidence="1">
    <location>
        <begin position="53"/>
        <end position="73"/>
    </location>
</feature>
<dbReference type="EMBL" id="U29345">
    <property type="protein sequence ID" value="AAC43937.1"/>
    <property type="molecule type" value="Genomic_DNA"/>
</dbReference>
<dbReference type="PIR" id="T11208">
    <property type="entry name" value="T11208"/>
</dbReference>
<dbReference type="RefSeq" id="WP_000342503.1">
    <property type="nucleotide sequence ID" value="NZ_VDCP01000001.1"/>
</dbReference>
<dbReference type="SMR" id="P0A1L9"/>
<dbReference type="PATRIC" id="fig|98360.39.peg.2682"/>
<dbReference type="OMA" id="GWYGETL"/>
<dbReference type="GO" id="GO:0005886">
    <property type="term" value="C:plasma membrane"/>
    <property type="evidence" value="ECO:0007669"/>
    <property type="project" value="UniProtKB-SubCell"/>
</dbReference>
<dbReference type="GO" id="GO:0009306">
    <property type="term" value="P:protein secretion"/>
    <property type="evidence" value="ECO:0007669"/>
    <property type="project" value="InterPro"/>
</dbReference>
<dbReference type="InterPro" id="IPR002191">
    <property type="entry name" value="Bac_export_3"/>
</dbReference>
<dbReference type="InterPro" id="IPR006306">
    <property type="entry name" value="T3SS_HrpO"/>
</dbReference>
<dbReference type="NCBIfam" id="TIGR01403">
    <property type="entry name" value="fliQ_rel_III"/>
    <property type="match status" value="1"/>
</dbReference>
<dbReference type="NCBIfam" id="NF011861">
    <property type="entry name" value="PRK15333.1"/>
    <property type="match status" value="1"/>
</dbReference>
<dbReference type="PANTHER" id="PTHR34040">
    <property type="entry name" value="FLAGELLAR BIOSYNTHETIC PROTEIN FLIQ"/>
    <property type="match status" value="1"/>
</dbReference>
<dbReference type="PANTHER" id="PTHR34040:SF7">
    <property type="entry name" value="SURFACE PRESENTATION OF ANTIGENS PROTEIN SPAQ"/>
    <property type="match status" value="1"/>
</dbReference>
<dbReference type="Pfam" id="PF01313">
    <property type="entry name" value="Bac_export_3"/>
    <property type="match status" value="1"/>
</dbReference>
<dbReference type="PRINTS" id="PR00952">
    <property type="entry name" value="TYPE3IMQPROT"/>
</dbReference>
<protein>
    <recommendedName>
        <fullName>Surface presentation of antigens protein SpaQ</fullName>
    </recommendedName>
</protein>
<sequence length="86" mass="9359">MDDLVFAGNKALYLVLILSGWPTIVATIIGLLVGLFQTVTQLQEQTLPFGIKLLGVCLCLFLLSGWYGEVLLSYGRQVIFLALAKG</sequence>
<accession>P0A1L9</accession>
<accession>P40704</accession>
<accession>Q54011</accession>
<accession>Q54013</accession>
<accession>Q57117</accession>
<accession>Q57533</accession>
<gene>
    <name type="primary">spaQ</name>
</gene>
<comment type="function">
    <text>Involved in a secretory pathway responsible for the surface presentation of determinants needed for the entry of Salmonella species into mammalian cells.</text>
</comment>
<comment type="subcellular location">
    <subcellularLocation>
        <location evidence="2">Cell membrane</location>
        <topology evidence="2">Multi-pass membrane protein</topology>
    </subcellularLocation>
</comment>
<comment type="similarity">
    <text evidence="2">Belongs to the FliQ/MopD/SpaQ family.</text>
</comment>
<proteinExistence type="inferred from homology"/>
<evidence type="ECO:0000255" key="1"/>
<evidence type="ECO:0000305" key="2"/>
<reference key="1">
    <citation type="journal article" date="1995" name="Proc. Natl. Acad. Sci. U.S.A.">
        <title>Relationship between evolutionary rate and cellular location among the Inv/Spa invasion proteins of Salmonella enterica.</title>
        <authorList>
            <person name="Li J."/>
            <person name="Ochman H."/>
            <person name="Groisman E.A."/>
            <person name="Boyd E.F."/>
            <person name="Solomon F."/>
            <person name="Nelson K."/>
            <person name="Selander R.K."/>
        </authorList>
    </citation>
    <scope>NUCLEOTIDE SEQUENCE [GENOMIC DNA]</scope>
    <source>
        <strain>s1518</strain>
    </source>
</reference>
<name>SPAQ_SALDU</name>
<organism>
    <name type="scientific">Salmonella dublin</name>
    <dbReference type="NCBI Taxonomy" id="98360"/>
    <lineage>
        <taxon>Bacteria</taxon>
        <taxon>Pseudomonadati</taxon>
        <taxon>Pseudomonadota</taxon>
        <taxon>Gammaproteobacteria</taxon>
        <taxon>Enterobacterales</taxon>
        <taxon>Enterobacteriaceae</taxon>
        <taxon>Salmonella</taxon>
    </lineage>
</organism>
<keyword id="KW-1003">Cell membrane</keyword>
<keyword id="KW-0472">Membrane</keyword>
<keyword id="KW-0812">Transmembrane</keyword>
<keyword id="KW-1133">Transmembrane helix</keyword>
<keyword id="KW-0843">Virulence</keyword>